<sequence length="114" mass="11444">MKYVAAYLMTVLGGNEAPTAADVSRVLEPVGAEVNPEVLKTLIDAMQGKAAHEVISAGLEKLQKVPCGGGAAAAAPAAAAAAGGGDSSSAAKETKKEEPEEEEEDGDMGLSLFD</sequence>
<accession>Q967Y9</accession>
<organism>
    <name type="scientific">Eimeria tenella</name>
    <name type="common">Coccidian parasite</name>
    <dbReference type="NCBI Taxonomy" id="5802"/>
    <lineage>
        <taxon>Eukaryota</taxon>
        <taxon>Sar</taxon>
        <taxon>Alveolata</taxon>
        <taxon>Apicomplexa</taxon>
        <taxon>Conoidasida</taxon>
        <taxon>Coccidia</taxon>
        <taxon>Eucoccidiorida</taxon>
        <taxon>Eimeriorina</taxon>
        <taxon>Eimeriidae</taxon>
        <taxon>Eimeria</taxon>
    </lineage>
</organism>
<keyword id="KW-0597">Phosphoprotein</keyword>
<keyword id="KW-0687">Ribonucleoprotein</keyword>
<keyword id="KW-0689">Ribosomal protein</keyword>
<protein>
    <recommendedName>
        <fullName evidence="3">Large ribosomal subunit protein P2</fullName>
    </recommendedName>
    <alternativeName>
        <fullName>60S acidic ribosomal protein P2</fullName>
    </alternativeName>
</protein>
<name>RLA2_EIMTE</name>
<dbReference type="EMBL" id="AF353514">
    <property type="protein sequence ID" value="AAK38885.1"/>
    <property type="status" value="ALT_INIT"/>
    <property type="molecule type" value="mRNA"/>
</dbReference>
<dbReference type="SMR" id="Q967Y9"/>
<dbReference type="VEuPathDB" id="ToxoDB:ETH2_0835200"/>
<dbReference type="VEuPathDB" id="ToxoDB:ETH_00022065"/>
<dbReference type="GO" id="GO:0022625">
    <property type="term" value="C:cytosolic large ribosomal subunit"/>
    <property type="evidence" value="ECO:0007669"/>
    <property type="project" value="InterPro"/>
</dbReference>
<dbReference type="GO" id="GO:0003735">
    <property type="term" value="F:structural constituent of ribosome"/>
    <property type="evidence" value="ECO:0007669"/>
    <property type="project" value="InterPro"/>
</dbReference>
<dbReference type="GO" id="GO:0002182">
    <property type="term" value="P:cytoplasmic translational elongation"/>
    <property type="evidence" value="ECO:0007669"/>
    <property type="project" value="InterPro"/>
</dbReference>
<dbReference type="CDD" id="cd05833">
    <property type="entry name" value="Ribosomal_P2"/>
    <property type="match status" value="1"/>
</dbReference>
<dbReference type="FunFam" id="1.10.10.1410:FF:000002">
    <property type="entry name" value="60S acidic ribosomal protein P2"/>
    <property type="match status" value="1"/>
</dbReference>
<dbReference type="Gene3D" id="1.10.10.1410">
    <property type="match status" value="1"/>
</dbReference>
<dbReference type="HAMAP" id="MF_01478">
    <property type="entry name" value="Ribosomal_L12_arch"/>
    <property type="match status" value="1"/>
</dbReference>
<dbReference type="InterPro" id="IPR038716">
    <property type="entry name" value="P1/P2_N_sf"/>
</dbReference>
<dbReference type="InterPro" id="IPR027534">
    <property type="entry name" value="Ribosomal_P1/P2"/>
</dbReference>
<dbReference type="InterPro" id="IPR044076">
    <property type="entry name" value="Ribosomal_P2"/>
</dbReference>
<dbReference type="PANTHER" id="PTHR21141">
    <property type="entry name" value="60S ACIDIC RIBOSOMAL PROTEIN FAMILY MEMBER"/>
    <property type="match status" value="1"/>
</dbReference>
<dbReference type="PANTHER" id="PTHR21141:SF5">
    <property type="entry name" value="LARGE RIBOSOMAL SUBUNIT PROTEIN P2"/>
    <property type="match status" value="1"/>
</dbReference>
<dbReference type="Pfam" id="PF00428">
    <property type="entry name" value="Ribosomal_60s"/>
    <property type="match status" value="1"/>
</dbReference>
<proteinExistence type="inferred from homology"/>
<evidence type="ECO:0000250" key="1"/>
<evidence type="ECO:0000256" key="2">
    <source>
        <dbReference type="SAM" id="MobiDB-lite"/>
    </source>
</evidence>
<evidence type="ECO:0000305" key="3"/>
<comment type="function">
    <text evidence="1">Plays an important role in the elongation step of protein synthesis.</text>
</comment>
<comment type="subunit">
    <text evidence="1">P1 and P2 exist as dimers at the large ribosomal subunit.</text>
</comment>
<comment type="PTM">
    <text evidence="1">Phosphorylated.</text>
</comment>
<comment type="similarity">
    <text evidence="3">Belongs to the eukaryotic ribosomal protein P1/P2 family.</text>
</comment>
<comment type="sequence caution" evidence="3">
    <conflict type="erroneous initiation">
        <sequence resource="EMBL-CDS" id="AAK38885"/>
    </conflict>
</comment>
<feature type="chain" id="PRO_0000157653" description="Large ribosomal subunit protein P2">
    <location>
        <begin position="1"/>
        <end position="114"/>
    </location>
</feature>
<feature type="region of interest" description="Disordered" evidence="2">
    <location>
        <begin position="76"/>
        <end position="114"/>
    </location>
</feature>
<feature type="compositionally biased region" description="Low complexity" evidence="2">
    <location>
        <begin position="76"/>
        <end position="91"/>
    </location>
</feature>
<reference key="1">
    <citation type="submission" date="2001-02" db="EMBL/GenBank/DDBJ databases">
        <title>Molecular cloning of a cDNA encoding an acidic ribosomal protein P2 of Eimeria tenella.</title>
        <authorList>
            <person name="Labbe M."/>
            <person name="Pery P."/>
        </authorList>
    </citation>
    <scope>NUCLEOTIDE SEQUENCE [MRNA]</scope>
    <source>
        <strain>PAPt38</strain>
    </source>
</reference>